<reference key="1">
    <citation type="journal article" date="2006" name="Nat. Biotechnol.">
        <title>The genome and transcriptomes of the anti-tumor agent Clostridium novyi-NT.</title>
        <authorList>
            <person name="Bettegowda C."/>
            <person name="Huang X."/>
            <person name="Lin J."/>
            <person name="Cheong I."/>
            <person name="Kohli M."/>
            <person name="Szabo S.A."/>
            <person name="Zhang X."/>
            <person name="Diaz L.A. Jr."/>
            <person name="Velculescu V.E."/>
            <person name="Parmigiani G."/>
            <person name="Kinzler K.W."/>
            <person name="Vogelstein B."/>
            <person name="Zhou S."/>
        </authorList>
    </citation>
    <scope>NUCLEOTIDE SEQUENCE [LARGE SCALE GENOMIC DNA]</scope>
    <source>
        <strain>NT</strain>
    </source>
</reference>
<keyword id="KW-0066">ATP synthesis</keyword>
<keyword id="KW-1003">Cell membrane</keyword>
<keyword id="KW-0139">CF(1)</keyword>
<keyword id="KW-0375">Hydrogen ion transport</keyword>
<keyword id="KW-0406">Ion transport</keyword>
<keyword id="KW-0472">Membrane</keyword>
<keyword id="KW-1185">Reference proteome</keyword>
<keyword id="KW-0813">Transport</keyword>
<gene>
    <name evidence="1" type="primary">atpC</name>
    <name type="ordered locus">NT01CX_0529</name>
</gene>
<proteinExistence type="inferred from homology"/>
<organism>
    <name type="scientific">Clostridium novyi (strain NT)</name>
    <dbReference type="NCBI Taxonomy" id="386415"/>
    <lineage>
        <taxon>Bacteria</taxon>
        <taxon>Bacillati</taxon>
        <taxon>Bacillota</taxon>
        <taxon>Clostridia</taxon>
        <taxon>Eubacteriales</taxon>
        <taxon>Clostridiaceae</taxon>
        <taxon>Clostridium</taxon>
    </lineage>
</organism>
<name>ATPE_CLONN</name>
<evidence type="ECO:0000255" key="1">
    <source>
        <dbReference type="HAMAP-Rule" id="MF_00530"/>
    </source>
</evidence>
<dbReference type="EMBL" id="CP000382">
    <property type="protein sequence ID" value="ABK62502.1"/>
    <property type="molecule type" value="Genomic_DNA"/>
</dbReference>
<dbReference type="RefSeq" id="WP_011722975.1">
    <property type="nucleotide sequence ID" value="NC_008593.1"/>
</dbReference>
<dbReference type="SMR" id="A0Q2Z3"/>
<dbReference type="STRING" id="386415.NT01CX_0529"/>
<dbReference type="KEGG" id="cno:NT01CX_0529"/>
<dbReference type="eggNOG" id="COG0355">
    <property type="taxonomic scope" value="Bacteria"/>
</dbReference>
<dbReference type="HOGENOM" id="CLU_084338_1_3_9"/>
<dbReference type="Proteomes" id="UP000008220">
    <property type="component" value="Chromosome"/>
</dbReference>
<dbReference type="GO" id="GO:0005886">
    <property type="term" value="C:plasma membrane"/>
    <property type="evidence" value="ECO:0007669"/>
    <property type="project" value="UniProtKB-SubCell"/>
</dbReference>
<dbReference type="GO" id="GO:0045259">
    <property type="term" value="C:proton-transporting ATP synthase complex"/>
    <property type="evidence" value="ECO:0007669"/>
    <property type="project" value="UniProtKB-KW"/>
</dbReference>
<dbReference type="GO" id="GO:0005524">
    <property type="term" value="F:ATP binding"/>
    <property type="evidence" value="ECO:0007669"/>
    <property type="project" value="UniProtKB-UniRule"/>
</dbReference>
<dbReference type="GO" id="GO:0046933">
    <property type="term" value="F:proton-transporting ATP synthase activity, rotational mechanism"/>
    <property type="evidence" value="ECO:0007669"/>
    <property type="project" value="UniProtKB-UniRule"/>
</dbReference>
<dbReference type="CDD" id="cd12152">
    <property type="entry name" value="F1-ATPase_delta"/>
    <property type="match status" value="1"/>
</dbReference>
<dbReference type="Gene3D" id="1.20.5.440">
    <property type="entry name" value="ATP synthase delta/epsilon subunit, C-terminal domain"/>
    <property type="match status" value="1"/>
</dbReference>
<dbReference type="Gene3D" id="2.60.15.10">
    <property type="entry name" value="F0F1 ATP synthase delta/epsilon subunit, N-terminal"/>
    <property type="match status" value="1"/>
</dbReference>
<dbReference type="HAMAP" id="MF_00530">
    <property type="entry name" value="ATP_synth_epsil_bac"/>
    <property type="match status" value="1"/>
</dbReference>
<dbReference type="InterPro" id="IPR036794">
    <property type="entry name" value="ATP_F1_dsu/esu_C_sf"/>
</dbReference>
<dbReference type="InterPro" id="IPR001469">
    <property type="entry name" value="ATP_synth_F1_dsu/esu"/>
</dbReference>
<dbReference type="InterPro" id="IPR020546">
    <property type="entry name" value="ATP_synth_F1_dsu/esu_N"/>
</dbReference>
<dbReference type="InterPro" id="IPR020547">
    <property type="entry name" value="ATP_synth_F1_esu_C"/>
</dbReference>
<dbReference type="InterPro" id="IPR036771">
    <property type="entry name" value="ATPsynth_dsu/esu_N"/>
</dbReference>
<dbReference type="NCBIfam" id="TIGR01216">
    <property type="entry name" value="ATP_synt_epsi"/>
    <property type="match status" value="1"/>
</dbReference>
<dbReference type="NCBIfam" id="NF009984">
    <property type="entry name" value="PRK13450.1"/>
    <property type="match status" value="1"/>
</dbReference>
<dbReference type="PANTHER" id="PTHR13822">
    <property type="entry name" value="ATP SYNTHASE DELTA/EPSILON CHAIN"/>
    <property type="match status" value="1"/>
</dbReference>
<dbReference type="PANTHER" id="PTHR13822:SF10">
    <property type="entry name" value="ATP SYNTHASE EPSILON CHAIN, CHLOROPLASTIC"/>
    <property type="match status" value="1"/>
</dbReference>
<dbReference type="Pfam" id="PF00401">
    <property type="entry name" value="ATP-synt_DE"/>
    <property type="match status" value="1"/>
</dbReference>
<dbReference type="Pfam" id="PF02823">
    <property type="entry name" value="ATP-synt_DE_N"/>
    <property type="match status" value="1"/>
</dbReference>
<dbReference type="SUPFAM" id="SSF46604">
    <property type="entry name" value="Epsilon subunit of F1F0-ATP synthase C-terminal domain"/>
    <property type="match status" value="1"/>
</dbReference>
<dbReference type="SUPFAM" id="SSF51344">
    <property type="entry name" value="Epsilon subunit of F1F0-ATP synthase N-terminal domain"/>
    <property type="match status" value="1"/>
</dbReference>
<comment type="function">
    <text evidence="1">Produces ATP from ADP in the presence of a proton gradient across the membrane.</text>
</comment>
<comment type="subunit">
    <text evidence="1">F-type ATPases have 2 components, CF(1) - the catalytic core - and CF(0) - the membrane proton channel. CF(1) has five subunits: alpha(3), beta(3), gamma(1), delta(1), epsilon(1). CF(0) has three main subunits: a, b and c.</text>
</comment>
<comment type="subcellular location">
    <subcellularLocation>
        <location evidence="1">Cell membrane</location>
        <topology evidence="1">Peripheral membrane protein</topology>
    </subcellularLocation>
</comment>
<comment type="similarity">
    <text evidence="1">Belongs to the ATPase epsilon chain family.</text>
</comment>
<protein>
    <recommendedName>
        <fullName evidence="1">ATP synthase epsilon chain</fullName>
    </recommendedName>
    <alternativeName>
        <fullName evidence="1">ATP synthase F1 sector epsilon subunit</fullName>
    </alternativeName>
    <alternativeName>
        <fullName evidence="1">F-ATPase epsilon subunit</fullName>
    </alternativeName>
</protein>
<accession>A0Q2Z3</accession>
<feature type="chain" id="PRO_1000056476" description="ATP synthase epsilon chain">
    <location>
        <begin position="1"/>
        <end position="131"/>
    </location>
</feature>
<sequence length="131" mass="14914">MAKTFKLKIVTPEKIFFEGEAEKINLETTEGKTEILANHSAFIAMLVPTNSKLITDKGEEKKFFLSSGILKVNTEEVVILCDAAEWPEEIDKKRAEEAKKRAEERLSKKDGVDIKRAEFALMRAIKRIEMV</sequence>